<proteinExistence type="inferred from homology"/>
<evidence type="ECO:0000255" key="1">
    <source>
        <dbReference type="HAMAP-Rule" id="MF_00050"/>
    </source>
</evidence>
<name>EFTS_PSESM</name>
<gene>
    <name evidence="1" type="primary">tsf</name>
    <name type="ordered locus">PSPTO_1535</name>
</gene>
<comment type="function">
    <text evidence="1">Associates with the EF-Tu.GDP complex and induces the exchange of GDP to GTP. It remains bound to the aminoacyl-tRNA.EF-Tu.GTP complex up to the GTP hydrolysis stage on the ribosome.</text>
</comment>
<comment type="subcellular location">
    <subcellularLocation>
        <location evidence="1">Cytoplasm</location>
    </subcellularLocation>
</comment>
<comment type="similarity">
    <text evidence="1">Belongs to the EF-Ts family.</text>
</comment>
<reference key="1">
    <citation type="journal article" date="2003" name="Proc. Natl. Acad. Sci. U.S.A.">
        <title>The complete genome sequence of the Arabidopsis and tomato pathogen Pseudomonas syringae pv. tomato DC3000.</title>
        <authorList>
            <person name="Buell C.R."/>
            <person name="Joardar V."/>
            <person name="Lindeberg M."/>
            <person name="Selengut J."/>
            <person name="Paulsen I.T."/>
            <person name="Gwinn M.L."/>
            <person name="Dodson R.J."/>
            <person name="DeBoy R.T."/>
            <person name="Durkin A.S."/>
            <person name="Kolonay J.F."/>
            <person name="Madupu R."/>
            <person name="Daugherty S.C."/>
            <person name="Brinkac L.M."/>
            <person name="Beanan M.J."/>
            <person name="Haft D.H."/>
            <person name="Nelson W.C."/>
            <person name="Davidsen T.M."/>
            <person name="Zafar N."/>
            <person name="Zhou L."/>
            <person name="Liu J."/>
            <person name="Yuan Q."/>
            <person name="Khouri H.M."/>
            <person name="Fedorova N.B."/>
            <person name="Tran B."/>
            <person name="Russell D."/>
            <person name="Berry K.J."/>
            <person name="Utterback T.R."/>
            <person name="Van Aken S.E."/>
            <person name="Feldblyum T.V."/>
            <person name="D'Ascenzo M."/>
            <person name="Deng W.-L."/>
            <person name="Ramos A.R."/>
            <person name="Alfano J.R."/>
            <person name="Cartinhour S."/>
            <person name="Chatterjee A.K."/>
            <person name="Delaney T.P."/>
            <person name="Lazarowitz S.G."/>
            <person name="Martin G.B."/>
            <person name="Schneider D.J."/>
            <person name="Tang X."/>
            <person name="Bender C.L."/>
            <person name="White O."/>
            <person name="Fraser C.M."/>
            <person name="Collmer A."/>
        </authorList>
    </citation>
    <scope>NUCLEOTIDE SEQUENCE [LARGE SCALE GENOMIC DNA]</scope>
    <source>
        <strain>ATCC BAA-871 / DC3000</strain>
    </source>
</reference>
<feature type="chain" id="PRO_0000161178" description="Elongation factor Ts">
    <location>
        <begin position="1"/>
        <end position="287"/>
    </location>
</feature>
<feature type="region of interest" description="Involved in Mg(2+) ion dislocation from EF-Tu" evidence="1">
    <location>
        <begin position="80"/>
        <end position="83"/>
    </location>
</feature>
<dbReference type="EMBL" id="AE016853">
    <property type="protein sequence ID" value="AAO55055.1"/>
    <property type="molecule type" value="Genomic_DNA"/>
</dbReference>
<dbReference type="RefSeq" id="NP_791360.1">
    <property type="nucleotide sequence ID" value="NC_004578.1"/>
</dbReference>
<dbReference type="RefSeq" id="WP_005765978.1">
    <property type="nucleotide sequence ID" value="NC_004578.1"/>
</dbReference>
<dbReference type="SMR" id="Q886P2"/>
<dbReference type="STRING" id="223283.PSPTO_1535"/>
<dbReference type="GeneID" id="1183172"/>
<dbReference type="KEGG" id="pst:PSPTO_1535"/>
<dbReference type="PATRIC" id="fig|223283.9.peg.1561"/>
<dbReference type="eggNOG" id="COG0264">
    <property type="taxonomic scope" value="Bacteria"/>
</dbReference>
<dbReference type="HOGENOM" id="CLU_047155_0_2_6"/>
<dbReference type="OrthoDB" id="9808348at2"/>
<dbReference type="PhylomeDB" id="Q886P2"/>
<dbReference type="Proteomes" id="UP000002515">
    <property type="component" value="Chromosome"/>
</dbReference>
<dbReference type="GO" id="GO:0005737">
    <property type="term" value="C:cytoplasm"/>
    <property type="evidence" value="ECO:0007669"/>
    <property type="project" value="UniProtKB-SubCell"/>
</dbReference>
<dbReference type="GO" id="GO:0003746">
    <property type="term" value="F:translation elongation factor activity"/>
    <property type="evidence" value="ECO:0007669"/>
    <property type="project" value="UniProtKB-UniRule"/>
</dbReference>
<dbReference type="CDD" id="cd14275">
    <property type="entry name" value="UBA_EF-Ts"/>
    <property type="match status" value="1"/>
</dbReference>
<dbReference type="FunFam" id="1.10.286.20:FF:000001">
    <property type="entry name" value="Elongation factor Ts"/>
    <property type="match status" value="1"/>
</dbReference>
<dbReference type="FunFam" id="1.10.8.10:FF:000001">
    <property type="entry name" value="Elongation factor Ts"/>
    <property type="match status" value="1"/>
</dbReference>
<dbReference type="Gene3D" id="1.10.286.20">
    <property type="match status" value="1"/>
</dbReference>
<dbReference type="Gene3D" id="1.10.8.10">
    <property type="entry name" value="DNA helicase RuvA subunit, C-terminal domain"/>
    <property type="match status" value="1"/>
</dbReference>
<dbReference type="Gene3D" id="3.30.479.20">
    <property type="entry name" value="Elongation factor Ts, dimerisation domain"/>
    <property type="match status" value="2"/>
</dbReference>
<dbReference type="HAMAP" id="MF_00050">
    <property type="entry name" value="EF_Ts"/>
    <property type="match status" value="1"/>
</dbReference>
<dbReference type="InterPro" id="IPR036402">
    <property type="entry name" value="EF-Ts_dimer_sf"/>
</dbReference>
<dbReference type="InterPro" id="IPR001816">
    <property type="entry name" value="Transl_elong_EFTs/EF1B"/>
</dbReference>
<dbReference type="InterPro" id="IPR014039">
    <property type="entry name" value="Transl_elong_EFTs/EF1B_dimer"/>
</dbReference>
<dbReference type="InterPro" id="IPR018101">
    <property type="entry name" value="Transl_elong_Ts_CS"/>
</dbReference>
<dbReference type="InterPro" id="IPR009060">
    <property type="entry name" value="UBA-like_sf"/>
</dbReference>
<dbReference type="NCBIfam" id="TIGR00116">
    <property type="entry name" value="tsf"/>
    <property type="match status" value="1"/>
</dbReference>
<dbReference type="PANTHER" id="PTHR11741">
    <property type="entry name" value="ELONGATION FACTOR TS"/>
    <property type="match status" value="1"/>
</dbReference>
<dbReference type="PANTHER" id="PTHR11741:SF0">
    <property type="entry name" value="ELONGATION FACTOR TS, MITOCHONDRIAL"/>
    <property type="match status" value="1"/>
</dbReference>
<dbReference type="Pfam" id="PF00889">
    <property type="entry name" value="EF_TS"/>
    <property type="match status" value="1"/>
</dbReference>
<dbReference type="SUPFAM" id="SSF54713">
    <property type="entry name" value="Elongation factor Ts (EF-Ts), dimerisation domain"/>
    <property type="match status" value="2"/>
</dbReference>
<dbReference type="SUPFAM" id="SSF46934">
    <property type="entry name" value="UBA-like"/>
    <property type="match status" value="1"/>
</dbReference>
<dbReference type="PROSITE" id="PS01126">
    <property type="entry name" value="EF_TS_1"/>
    <property type="match status" value="1"/>
</dbReference>
<dbReference type="PROSITE" id="PS01127">
    <property type="entry name" value="EF_TS_2"/>
    <property type="match status" value="1"/>
</dbReference>
<accession>Q886P2</accession>
<sequence length="287" mass="30582">MAEITAALVKELRERTGEGMMDCKKALTKAGGDIEKAIDDMRASGAIKAAKKAGNVAAEGAIAIKDDGKAAVIIEVNSQTDFLALQDDFKNFVAASVEKAFADKLTDVAPLIEAQETARLVLVGKVGENVNIRRLKRIEGDVVGSYLHGNKIGVVVTLKGGNVELAKDIAMHVAASNPEFLFPSEVSAEAIEREKSVFLQLNEDKIKGKPAEIVEKMVGGRITKFLAEASLVEQAFVKNPEIKVGDLAKKAGAEIVSFTYFKVGEGIEKPVDNFADEVAAQLAAAKQ</sequence>
<keyword id="KW-0963">Cytoplasm</keyword>
<keyword id="KW-0251">Elongation factor</keyword>
<keyword id="KW-0648">Protein biosynthesis</keyword>
<keyword id="KW-1185">Reference proteome</keyword>
<organism>
    <name type="scientific">Pseudomonas syringae pv. tomato (strain ATCC BAA-871 / DC3000)</name>
    <dbReference type="NCBI Taxonomy" id="223283"/>
    <lineage>
        <taxon>Bacteria</taxon>
        <taxon>Pseudomonadati</taxon>
        <taxon>Pseudomonadota</taxon>
        <taxon>Gammaproteobacteria</taxon>
        <taxon>Pseudomonadales</taxon>
        <taxon>Pseudomonadaceae</taxon>
        <taxon>Pseudomonas</taxon>
    </lineage>
</organism>
<protein>
    <recommendedName>
        <fullName evidence="1">Elongation factor Ts</fullName>
        <shortName evidence="1">EF-Ts</shortName>
    </recommendedName>
</protein>